<dbReference type="EMBL" id="M35027">
    <property type="protein sequence ID" value="AAA48067.1"/>
    <property type="molecule type" value="Genomic_DNA"/>
</dbReference>
<dbReference type="PIR" id="A39986">
    <property type="entry name" value="QQVZW1"/>
</dbReference>
<dbReference type="Proteomes" id="UP000008269">
    <property type="component" value="Segment"/>
</dbReference>
<dbReference type="InterPro" id="IPR008446">
    <property type="entry name" value="Chordopox_G2"/>
</dbReference>
<dbReference type="Pfam" id="PF05796">
    <property type="entry name" value="Chordopox_G2"/>
    <property type="match status" value="1"/>
</dbReference>
<protein>
    <recommendedName>
        <fullName>Late transcription elongation factor OPG087</fullName>
    </recommendedName>
    <alternativeName>
        <fullName>Late transcription elongation factor G2</fullName>
    </alternativeName>
    <alternativeName>
        <fullName>Protein G2</fullName>
    </alternativeName>
</protein>
<accession>P68457</accession>
<accession>P21023</accession>
<organismHost>
    <name type="scientific">Homo sapiens</name>
    <name type="common">Human</name>
    <dbReference type="NCBI Taxonomy" id="9606"/>
</organismHost>
<organism>
    <name type="scientific">Vaccinia virus (strain Copenhagen)</name>
    <name type="common">VACV</name>
    <dbReference type="NCBI Taxonomy" id="10249"/>
    <lineage>
        <taxon>Viruses</taxon>
        <taxon>Varidnaviria</taxon>
        <taxon>Bamfordvirae</taxon>
        <taxon>Nucleocytoviricota</taxon>
        <taxon>Pokkesviricetes</taxon>
        <taxon>Chitovirales</taxon>
        <taxon>Poxviridae</taxon>
        <taxon>Chordopoxvirinae</taxon>
        <taxon>Orthopoxvirus</taxon>
        <taxon>Vaccinia virus</taxon>
    </lineage>
</organism>
<gene>
    <name type="primary">OPG087</name>
    <name type="ORF">G2R</name>
</gene>
<proteinExistence type="inferred from homology"/>
<comment type="function">
    <text evidence="1">Involved in postreplicative transcription elongation on intermediate and late genes.</text>
</comment>
<comment type="subunit">
    <text evidence="1">Interacts with H5 and A18. Might be part of a transcription complex composed at least of OPG087, OPG145, and OPG110.</text>
</comment>
<comment type="similarity">
    <text evidence="2">Belongs to the orthopoxvirus OPG087 family.</text>
</comment>
<feature type="chain" id="PRO_0000099524" description="Late transcription elongation factor OPG087">
    <location>
        <begin position="1"/>
        <end position="220"/>
    </location>
</feature>
<name>PG087_VACCC</name>
<keyword id="KW-0244">Early protein</keyword>
<keyword id="KW-0251">Elongation factor</keyword>
<keyword id="KW-0648">Protein biosynthesis</keyword>
<keyword id="KW-1185">Reference proteome</keyword>
<sequence length="220" mass="25744">MPFRDLILFNLSKFLLTEDEESLEIVSSLCRGFEISYDDLITYFPDRKYHKYISKVFEHVDLSEELSMEFHDTTLRDLVYLRLYKYSKCIRPCYKLGDNLKGIVVIKDRNIYIREANDDLIEYLLKEYTPQIYTYSNERVPITGSKLILCGFSQVTFMAYTTSHITTNKKVDVLVSKKCIDELVDPINYQILQNLFDKGSGTINKILRKIFYSVTGGQTP</sequence>
<reference key="1">
    <citation type="journal article" date="1990" name="Virology">
        <title>The complete DNA sequence of vaccinia virus.</title>
        <authorList>
            <person name="Goebel S.J."/>
            <person name="Johnson G.P."/>
            <person name="Perkus M.E."/>
            <person name="Davis S.W."/>
            <person name="Winslow J.P."/>
            <person name="Paoletti E."/>
        </authorList>
    </citation>
    <scope>NUCLEOTIDE SEQUENCE [LARGE SCALE GENOMIC DNA]</scope>
</reference>
<reference key="2">
    <citation type="journal article" date="1990" name="Virology">
        <title>Appendix to 'The complete DNA sequence of vaccinia virus'.</title>
        <authorList>
            <person name="Goebel S.J."/>
            <person name="Johnson G.P."/>
            <person name="Perkus M.E."/>
            <person name="Davis S.W."/>
            <person name="Winslow J.P."/>
            <person name="Paoletti E."/>
        </authorList>
    </citation>
    <scope>NUCLEOTIDE SEQUENCE [LARGE SCALE GENOMIC DNA]</scope>
</reference>
<reference key="3">
    <citation type="journal article" date="2003" name="J. Gen. Virol.">
        <title>Vaccinia virus transcription.</title>
        <authorList>
            <person name="Broyles S.S."/>
        </authorList>
    </citation>
    <scope>REVIEW</scope>
</reference>
<evidence type="ECO:0000250" key="1">
    <source>
        <dbReference type="UniProtKB" id="P68456"/>
    </source>
</evidence>
<evidence type="ECO:0000305" key="2"/>